<reference key="1">
    <citation type="journal article" date="2009" name="Infect. Immun.">
        <title>Comparative genomics reveal extensive transposon-mediated genomic plasticity and diversity among potential effector proteins within the genus Coxiella.</title>
        <authorList>
            <person name="Beare P.A."/>
            <person name="Unsworth N."/>
            <person name="Andoh M."/>
            <person name="Voth D.E."/>
            <person name="Omsland A."/>
            <person name="Gilk S.D."/>
            <person name="Williams K.P."/>
            <person name="Sobral B.W."/>
            <person name="Kupko J.J. III"/>
            <person name="Porcella S.F."/>
            <person name="Samuel J.E."/>
            <person name="Heinzen R.A."/>
        </authorList>
    </citation>
    <scope>NUCLEOTIDE SEQUENCE [LARGE SCALE GENOMIC DNA]</scope>
    <source>
        <strain>CbuK_Q154</strain>
    </source>
</reference>
<evidence type="ECO:0000255" key="1">
    <source>
        <dbReference type="HAMAP-Rule" id="MF_00225"/>
    </source>
</evidence>
<protein>
    <recommendedName>
        <fullName evidence="1">Dihydroorotate dehydrogenase (quinone)</fullName>
        <ecNumber evidence="1">1.3.5.2</ecNumber>
    </recommendedName>
    <alternativeName>
        <fullName evidence="1">DHOdehase</fullName>
        <shortName evidence="1">DHOD</shortName>
        <shortName evidence="1">DHODase</shortName>
    </alternativeName>
    <alternativeName>
        <fullName evidence="1">Dihydroorotate oxidase</fullName>
    </alternativeName>
</protein>
<comment type="function">
    <text evidence="1">Catalyzes the conversion of dihydroorotate to orotate with quinone as electron acceptor.</text>
</comment>
<comment type="catalytic activity">
    <reaction evidence="1">
        <text>(S)-dihydroorotate + a quinone = orotate + a quinol</text>
        <dbReference type="Rhea" id="RHEA:30187"/>
        <dbReference type="ChEBI" id="CHEBI:24646"/>
        <dbReference type="ChEBI" id="CHEBI:30839"/>
        <dbReference type="ChEBI" id="CHEBI:30864"/>
        <dbReference type="ChEBI" id="CHEBI:132124"/>
        <dbReference type="EC" id="1.3.5.2"/>
    </reaction>
</comment>
<comment type="cofactor">
    <cofactor evidence="1">
        <name>FMN</name>
        <dbReference type="ChEBI" id="CHEBI:58210"/>
    </cofactor>
    <text evidence="1">Binds 1 FMN per subunit.</text>
</comment>
<comment type="pathway">
    <text evidence="1">Pyrimidine metabolism; UMP biosynthesis via de novo pathway; orotate from (S)-dihydroorotate (quinone route): step 1/1.</text>
</comment>
<comment type="subunit">
    <text evidence="1">Monomer.</text>
</comment>
<comment type="subcellular location">
    <subcellularLocation>
        <location evidence="1">Cell membrane</location>
        <topology evidence="1">Peripheral membrane protein</topology>
    </subcellularLocation>
</comment>
<comment type="similarity">
    <text evidence="1">Belongs to the dihydroorotate dehydrogenase family. Type 2 subfamily.</text>
</comment>
<sequence length="347" mass="39314">MIYRYLRPWLFKLEPETAHALTLNCLKWFYCYWLINRRLQRFPQKPTVVFGIEFPNPVGLAAGLDKNGEYMDELLGLGFGFIEVGAVTPKPQPGNSKPRIFRLPQARALINRMGFNNLGVDYLVEQLKRRKVKGIVGVNIGKNLTTPLEKAHEDYQNCFEKLYSYVDYVTINISSPNTPELRQLQSERYLADLLTRLKEDQRRLEDQYHKRVPLFLKIAPDLTPEEIQTIATLALQHRIEGIVATNTSCSRQGTEKLPNANEAGGLSGKPLFPMTLQVVKQLHSFLGDEIPIVAVGGIFSGENAQTLINAGARLVQLYTGLIYEGPELVKNIVEFLTLSRQTREGIN</sequence>
<proteinExistence type="inferred from homology"/>
<feature type="chain" id="PRO_1000100256" description="Dihydroorotate dehydrogenase (quinone)">
    <location>
        <begin position="1"/>
        <end position="347"/>
    </location>
</feature>
<feature type="active site" description="Nucleophile" evidence="1">
    <location>
        <position position="175"/>
    </location>
</feature>
<feature type="binding site" evidence="1">
    <location>
        <begin position="62"/>
        <end position="66"/>
    </location>
    <ligand>
        <name>FMN</name>
        <dbReference type="ChEBI" id="CHEBI:58210"/>
    </ligand>
</feature>
<feature type="binding site" evidence="1">
    <location>
        <position position="66"/>
    </location>
    <ligand>
        <name>substrate</name>
    </ligand>
</feature>
<feature type="binding site" evidence="1">
    <location>
        <position position="86"/>
    </location>
    <ligand>
        <name>FMN</name>
        <dbReference type="ChEBI" id="CHEBI:58210"/>
    </ligand>
</feature>
<feature type="binding site" evidence="1">
    <location>
        <begin position="111"/>
        <end position="115"/>
    </location>
    <ligand>
        <name>substrate</name>
    </ligand>
</feature>
<feature type="binding site" evidence="1">
    <location>
        <position position="139"/>
    </location>
    <ligand>
        <name>FMN</name>
        <dbReference type="ChEBI" id="CHEBI:58210"/>
    </ligand>
</feature>
<feature type="binding site" evidence="1">
    <location>
        <position position="172"/>
    </location>
    <ligand>
        <name>FMN</name>
        <dbReference type="ChEBI" id="CHEBI:58210"/>
    </ligand>
</feature>
<feature type="binding site" evidence="1">
    <location>
        <position position="172"/>
    </location>
    <ligand>
        <name>substrate</name>
    </ligand>
</feature>
<feature type="binding site" evidence="1">
    <location>
        <position position="177"/>
    </location>
    <ligand>
        <name>substrate</name>
    </ligand>
</feature>
<feature type="binding site" evidence="1">
    <location>
        <position position="217"/>
    </location>
    <ligand>
        <name>FMN</name>
        <dbReference type="ChEBI" id="CHEBI:58210"/>
    </ligand>
</feature>
<feature type="binding site" evidence="1">
    <location>
        <position position="245"/>
    </location>
    <ligand>
        <name>FMN</name>
        <dbReference type="ChEBI" id="CHEBI:58210"/>
    </ligand>
</feature>
<feature type="binding site" evidence="1">
    <location>
        <begin position="246"/>
        <end position="247"/>
    </location>
    <ligand>
        <name>substrate</name>
    </ligand>
</feature>
<feature type="binding site" evidence="1">
    <location>
        <position position="268"/>
    </location>
    <ligand>
        <name>FMN</name>
        <dbReference type="ChEBI" id="CHEBI:58210"/>
    </ligand>
</feature>
<feature type="binding site" evidence="1">
    <location>
        <position position="297"/>
    </location>
    <ligand>
        <name>FMN</name>
        <dbReference type="ChEBI" id="CHEBI:58210"/>
    </ligand>
</feature>
<feature type="binding site" evidence="1">
    <location>
        <begin position="318"/>
        <end position="319"/>
    </location>
    <ligand>
        <name>FMN</name>
        <dbReference type="ChEBI" id="CHEBI:58210"/>
    </ligand>
</feature>
<dbReference type="EC" id="1.3.5.2" evidence="1"/>
<dbReference type="EMBL" id="CP001020">
    <property type="protein sequence ID" value="ACJ20103.1"/>
    <property type="molecule type" value="Genomic_DNA"/>
</dbReference>
<dbReference type="RefSeq" id="WP_005768550.1">
    <property type="nucleotide sequence ID" value="NC_011528.1"/>
</dbReference>
<dbReference type="SMR" id="B6J754"/>
<dbReference type="KEGG" id="cbc:CbuK_0868"/>
<dbReference type="HOGENOM" id="CLU_013640_2_0_6"/>
<dbReference type="UniPathway" id="UPA00070">
    <property type="reaction ID" value="UER00946"/>
</dbReference>
<dbReference type="GO" id="GO:0005737">
    <property type="term" value="C:cytoplasm"/>
    <property type="evidence" value="ECO:0007669"/>
    <property type="project" value="InterPro"/>
</dbReference>
<dbReference type="GO" id="GO:0005886">
    <property type="term" value="C:plasma membrane"/>
    <property type="evidence" value="ECO:0007669"/>
    <property type="project" value="UniProtKB-SubCell"/>
</dbReference>
<dbReference type="GO" id="GO:0106430">
    <property type="term" value="F:dihydroorotate dehydrogenase (quinone) activity"/>
    <property type="evidence" value="ECO:0007669"/>
    <property type="project" value="UniProtKB-EC"/>
</dbReference>
<dbReference type="GO" id="GO:0006207">
    <property type="term" value="P:'de novo' pyrimidine nucleobase biosynthetic process"/>
    <property type="evidence" value="ECO:0007669"/>
    <property type="project" value="InterPro"/>
</dbReference>
<dbReference type="GO" id="GO:0044205">
    <property type="term" value="P:'de novo' UMP biosynthetic process"/>
    <property type="evidence" value="ECO:0007669"/>
    <property type="project" value="UniProtKB-UniRule"/>
</dbReference>
<dbReference type="CDD" id="cd04738">
    <property type="entry name" value="DHOD_2_like"/>
    <property type="match status" value="1"/>
</dbReference>
<dbReference type="FunFam" id="3.20.20.70:FF:000028">
    <property type="entry name" value="Dihydroorotate dehydrogenase (quinone)"/>
    <property type="match status" value="1"/>
</dbReference>
<dbReference type="Gene3D" id="3.20.20.70">
    <property type="entry name" value="Aldolase class I"/>
    <property type="match status" value="1"/>
</dbReference>
<dbReference type="HAMAP" id="MF_00225">
    <property type="entry name" value="DHO_dh_type2"/>
    <property type="match status" value="1"/>
</dbReference>
<dbReference type="InterPro" id="IPR013785">
    <property type="entry name" value="Aldolase_TIM"/>
</dbReference>
<dbReference type="InterPro" id="IPR050074">
    <property type="entry name" value="DHO_dehydrogenase"/>
</dbReference>
<dbReference type="InterPro" id="IPR012135">
    <property type="entry name" value="Dihydroorotate_DH_1_2"/>
</dbReference>
<dbReference type="InterPro" id="IPR005719">
    <property type="entry name" value="Dihydroorotate_DH_2"/>
</dbReference>
<dbReference type="InterPro" id="IPR005720">
    <property type="entry name" value="Dihydroorotate_DH_cat"/>
</dbReference>
<dbReference type="InterPro" id="IPR001295">
    <property type="entry name" value="Dihydroorotate_DH_CS"/>
</dbReference>
<dbReference type="NCBIfam" id="NF003644">
    <property type="entry name" value="PRK05286.1-1"/>
    <property type="match status" value="1"/>
</dbReference>
<dbReference type="NCBIfam" id="NF003645">
    <property type="entry name" value="PRK05286.1-2"/>
    <property type="match status" value="1"/>
</dbReference>
<dbReference type="NCBIfam" id="NF003646">
    <property type="entry name" value="PRK05286.1-4"/>
    <property type="match status" value="1"/>
</dbReference>
<dbReference type="NCBIfam" id="NF003652">
    <property type="entry name" value="PRK05286.2-5"/>
    <property type="match status" value="1"/>
</dbReference>
<dbReference type="NCBIfam" id="TIGR01036">
    <property type="entry name" value="pyrD_sub2"/>
    <property type="match status" value="1"/>
</dbReference>
<dbReference type="PANTHER" id="PTHR48109:SF4">
    <property type="entry name" value="DIHYDROOROTATE DEHYDROGENASE (QUINONE), MITOCHONDRIAL"/>
    <property type="match status" value="1"/>
</dbReference>
<dbReference type="PANTHER" id="PTHR48109">
    <property type="entry name" value="DIHYDROOROTATE DEHYDROGENASE (QUINONE), MITOCHONDRIAL-RELATED"/>
    <property type="match status" value="1"/>
</dbReference>
<dbReference type="Pfam" id="PF01180">
    <property type="entry name" value="DHO_dh"/>
    <property type="match status" value="1"/>
</dbReference>
<dbReference type="PIRSF" id="PIRSF000164">
    <property type="entry name" value="DHO_oxidase"/>
    <property type="match status" value="1"/>
</dbReference>
<dbReference type="SUPFAM" id="SSF51395">
    <property type="entry name" value="FMN-linked oxidoreductases"/>
    <property type="match status" value="1"/>
</dbReference>
<dbReference type="PROSITE" id="PS00911">
    <property type="entry name" value="DHODEHASE_1"/>
    <property type="match status" value="1"/>
</dbReference>
<dbReference type="PROSITE" id="PS00912">
    <property type="entry name" value="DHODEHASE_2"/>
    <property type="match status" value="1"/>
</dbReference>
<accession>B6J754</accession>
<name>PYRD_COXB1</name>
<organism>
    <name type="scientific">Coxiella burnetii (strain CbuK_Q154)</name>
    <name type="common">Coxiella burnetii (strain Q154)</name>
    <dbReference type="NCBI Taxonomy" id="434924"/>
    <lineage>
        <taxon>Bacteria</taxon>
        <taxon>Pseudomonadati</taxon>
        <taxon>Pseudomonadota</taxon>
        <taxon>Gammaproteobacteria</taxon>
        <taxon>Legionellales</taxon>
        <taxon>Coxiellaceae</taxon>
        <taxon>Coxiella</taxon>
    </lineage>
</organism>
<gene>
    <name evidence="1" type="primary">pyrD</name>
    <name type="ordered locus">CbuK_0868</name>
</gene>
<keyword id="KW-1003">Cell membrane</keyword>
<keyword id="KW-0285">Flavoprotein</keyword>
<keyword id="KW-0288">FMN</keyword>
<keyword id="KW-0472">Membrane</keyword>
<keyword id="KW-0560">Oxidoreductase</keyword>
<keyword id="KW-0665">Pyrimidine biosynthesis</keyword>